<dbReference type="EC" id="1.2.1.41" evidence="1"/>
<dbReference type="EMBL" id="BX640447">
    <property type="protein sequence ID" value="CAE33872.1"/>
    <property type="molecule type" value="Genomic_DNA"/>
</dbReference>
<dbReference type="RefSeq" id="WP_010926801.1">
    <property type="nucleotide sequence ID" value="NC_002927.3"/>
</dbReference>
<dbReference type="SMR" id="Q7WH30"/>
<dbReference type="KEGG" id="bbr:BB3380"/>
<dbReference type="eggNOG" id="COG0014">
    <property type="taxonomic scope" value="Bacteria"/>
</dbReference>
<dbReference type="HOGENOM" id="CLU_030231_0_0_4"/>
<dbReference type="UniPathway" id="UPA00098">
    <property type="reaction ID" value="UER00360"/>
</dbReference>
<dbReference type="Proteomes" id="UP000001027">
    <property type="component" value="Chromosome"/>
</dbReference>
<dbReference type="GO" id="GO:0005737">
    <property type="term" value="C:cytoplasm"/>
    <property type="evidence" value="ECO:0007669"/>
    <property type="project" value="UniProtKB-SubCell"/>
</dbReference>
<dbReference type="GO" id="GO:0004350">
    <property type="term" value="F:glutamate-5-semialdehyde dehydrogenase activity"/>
    <property type="evidence" value="ECO:0007669"/>
    <property type="project" value="UniProtKB-UniRule"/>
</dbReference>
<dbReference type="GO" id="GO:0050661">
    <property type="term" value="F:NADP binding"/>
    <property type="evidence" value="ECO:0007669"/>
    <property type="project" value="InterPro"/>
</dbReference>
<dbReference type="GO" id="GO:0055129">
    <property type="term" value="P:L-proline biosynthetic process"/>
    <property type="evidence" value="ECO:0007669"/>
    <property type="project" value="UniProtKB-UniRule"/>
</dbReference>
<dbReference type="CDD" id="cd07079">
    <property type="entry name" value="ALDH_F18-19_ProA-GPR"/>
    <property type="match status" value="1"/>
</dbReference>
<dbReference type="FunFam" id="3.40.309.10:FF:000006">
    <property type="entry name" value="Gamma-glutamyl phosphate reductase"/>
    <property type="match status" value="1"/>
</dbReference>
<dbReference type="Gene3D" id="3.40.605.10">
    <property type="entry name" value="Aldehyde Dehydrogenase, Chain A, domain 1"/>
    <property type="match status" value="1"/>
</dbReference>
<dbReference type="Gene3D" id="3.40.309.10">
    <property type="entry name" value="Aldehyde Dehydrogenase, Chain A, domain 2"/>
    <property type="match status" value="1"/>
</dbReference>
<dbReference type="HAMAP" id="MF_00412">
    <property type="entry name" value="ProA"/>
    <property type="match status" value="1"/>
</dbReference>
<dbReference type="InterPro" id="IPR016161">
    <property type="entry name" value="Ald_DH/histidinol_DH"/>
</dbReference>
<dbReference type="InterPro" id="IPR016163">
    <property type="entry name" value="Ald_DH_C"/>
</dbReference>
<dbReference type="InterPro" id="IPR016162">
    <property type="entry name" value="Ald_DH_N"/>
</dbReference>
<dbReference type="InterPro" id="IPR015590">
    <property type="entry name" value="Aldehyde_DH_dom"/>
</dbReference>
<dbReference type="InterPro" id="IPR020593">
    <property type="entry name" value="G-glutamylP_reductase_CS"/>
</dbReference>
<dbReference type="InterPro" id="IPR012134">
    <property type="entry name" value="Glu-5-SA_DH"/>
</dbReference>
<dbReference type="InterPro" id="IPR000965">
    <property type="entry name" value="GPR_dom"/>
</dbReference>
<dbReference type="NCBIfam" id="NF001221">
    <property type="entry name" value="PRK00197.1"/>
    <property type="match status" value="1"/>
</dbReference>
<dbReference type="NCBIfam" id="TIGR00407">
    <property type="entry name" value="proA"/>
    <property type="match status" value="1"/>
</dbReference>
<dbReference type="PANTHER" id="PTHR11063:SF8">
    <property type="entry name" value="DELTA-1-PYRROLINE-5-CARBOXYLATE SYNTHASE"/>
    <property type="match status" value="1"/>
</dbReference>
<dbReference type="PANTHER" id="PTHR11063">
    <property type="entry name" value="GLUTAMATE SEMIALDEHYDE DEHYDROGENASE"/>
    <property type="match status" value="1"/>
</dbReference>
<dbReference type="Pfam" id="PF00171">
    <property type="entry name" value="Aldedh"/>
    <property type="match status" value="2"/>
</dbReference>
<dbReference type="PIRSF" id="PIRSF000151">
    <property type="entry name" value="GPR"/>
    <property type="match status" value="1"/>
</dbReference>
<dbReference type="SUPFAM" id="SSF53720">
    <property type="entry name" value="ALDH-like"/>
    <property type="match status" value="1"/>
</dbReference>
<dbReference type="PROSITE" id="PS01223">
    <property type="entry name" value="PROA"/>
    <property type="match status" value="1"/>
</dbReference>
<feature type="chain" id="PRO_0000189701" description="Gamma-glutamyl phosphate reductase">
    <location>
        <begin position="1"/>
        <end position="419"/>
    </location>
</feature>
<accession>Q7WH30</accession>
<gene>
    <name evidence="1" type="primary">proA</name>
    <name type="ordered locus">BB3380</name>
</gene>
<organism>
    <name type="scientific">Bordetella bronchiseptica (strain ATCC BAA-588 / NCTC 13252 / RB50)</name>
    <name type="common">Alcaligenes bronchisepticus</name>
    <dbReference type="NCBI Taxonomy" id="257310"/>
    <lineage>
        <taxon>Bacteria</taxon>
        <taxon>Pseudomonadati</taxon>
        <taxon>Pseudomonadota</taxon>
        <taxon>Betaproteobacteria</taxon>
        <taxon>Burkholderiales</taxon>
        <taxon>Alcaligenaceae</taxon>
        <taxon>Bordetella</taxon>
    </lineage>
</organism>
<protein>
    <recommendedName>
        <fullName evidence="1">Gamma-glutamyl phosphate reductase</fullName>
        <shortName evidence="1">GPR</shortName>
        <ecNumber evidence="1">1.2.1.41</ecNumber>
    </recommendedName>
    <alternativeName>
        <fullName evidence="1">Glutamate-5-semialdehyde dehydrogenase</fullName>
    </alternativeName>
    <alternativeName>
        <fullName evidence="1">Glutamyl-gamma-semialdehyde dehydrogenase</fullName>
        <shortName evidence="1">GSA dehydrogenase</shortName>
    </alternativeName>
</protein>
<name>PROA_BORBR</name>
<comment type="function">
    <text evidence="1">Catalyzes the NADPH-dependent reduction of L-glutamate 5-phosphate into L-glutamate 5-semialdehyde and phosphate. The product spontaneously undergoes cyclization to form 1-pyrroline-5-carboxylate.</text>
</comment>
<comment type="catalytic activity">
    <reaction evidence="1">
        <text>L-glutamate 5-semialdehyde + phosphate + NADP(+) = L-glutamyl 5-phosphate + NADPH + H(+)</text>
        <dbReference type="Rhea" id="RHEA:19541"/>
        <dbReference type="ChEBI" id="CHEBI:15378"/>
        <dbReference type="ChEBI" id="CHEBI:43474"/>
        <dbReference type="ChEBI" id="CHEBI:57783"/>
        <dbReference type="ChEBI" id="CHEBI:58066"/>
        <dbReference type="ChEBI" id="CHEBI:58274"/>
        <dbReference type="ChEBI" id="CHEBI:58349"/>
        <dbReference type="EC" id="1.2.1.41"/>
    </reaction>
</comment>
<comment type="pathway">
    <text evidence="1">Amino-acid biosynthesis; L-proline biosynthesis; L-glutamate 5-semialdehyde from L-glutamate: step 2/2.</text>
</comment>
<comment type="subcellular location">
    <subcellularLocation>
        <location evidence="1">Cytoplasm</location>
    </subcellularLocation>
</comment>
<comment type="similarity">
    <text evidence="1">Belongs to the gamma-glutamyl phosphate reductase family.</text>
</comment>
<reference key="1">
    <citation type="journal article" date="2003" name="Nat. Genet.">
        <title>Comparative analysis of the genome sequences of Bordetella pertussis, Bordetella parapertussis and Bordetella bronchiseptica.</title>
        <authorList>
            <person name="Parkhill J."/>
            <person name="Sebaihia M."/>
            <person name="Preston A."/>
            <person name="Murphy L.D."/>
            <person name="Thomson N.R."/>
            <person name="Harris D.E."/>
            <person name="Holden M.T.G."/>
            <person name="Churcher C.M."/>
            <person name="Bentley S.D."/>
            <person name="Mungall K.L."/>
            <person name="Cerdeno-Tarraga A.-M."/>
            <person name="Temple L."/>
            <person name="James K.D."/>
            <person name="Harris B."/>
            <person name="Quail M.A."/>
            <person name="Achtman M."/>
            <person name="Atkin R."/>
            <person name="Baker S."/>
            <person name="Basham D."/>
            <person name="Bason N."/>
            <person name="Cherevach I."/>
            <person name="Chillingworth T."/>
            <person name="Collins M."/>
            <person name="Cronin A."/>
            <person name="Davis P."/>
            <person name="Doggett J."/>
            <person name="Feltwell T."/>
            <person name="Goble A."/>
            <person name="Hamlin N."/>
            <person name="Hauser H."/>
            <person name="Holroyd S."/>
            <person name="Jagels K."/>
            <person name="Leather S."/>
            <person name="Moule S."/>
            <person name="Norberczak H."/>
            <person name="O'Neil S."/>
            <person name="Ormond D."/>
            <person name="Price C."/>
            <person name="Rabbinowitsch E."/>
            <person name="Rutter S."/>
            <person name="Sanders M."/>
            <person name="Saunders D."/>
            <person name="Seeger K."/>
            <person name="Sharp S."/>
            <person name="Simmonds M."/>
            <person name="Skelton J."/>
            <person name="Squares R."/>
            <person name="Squares S."/>
            <person name="Stevens K."/>
            <person name="Unwin L."/>
            <person name="Whitehead S."/>
            <person name="Barrell B.G."/>
            <person name="Maskell D.J."/>
        </authorList>
    </citation>
    <scope>NUCLEOTIDE SEQUENCE [LARGE SCALE GENOMIC DNA]</scope>
    <source>
        <strain>ATCC BAA-588 / NCTC 13252 / RB50</strain>
    </source>
</reference>
<keyword id="KW-0028">Amino-acid biosynthesis</keyword>
<keyword id="KW-0963">Cytoplasm</keyword>
<keyword id="KW-0521">NADP</keyword>
<keyword id="KW-0560">Oxidoreductase</keyword>
<keyword id="KW-0641">Proline biosynthesis</keyword>
<evidence type="ECO:0000255" key="1">
    <source>
        <dbReference type="HAMAP-Rule" id="MF_00412"/>
    </source>
</evidence>
<proteinExistence type="inferred from homology"/>
<sequence length="419" mass="44277">MSSIETYMQSVGEQARTASRAMMRATGAAKNQALLAMAEAILAQRAELQAANAKDVAAARANGLEAALLDRLTLSDRSIALMAEGLRQIAALPDPVGSITATSVRPNGMRVAQMRVPLGVIGIIYESRPNVTIDAAALCLKSGNATILRGGSEALHSNVALGRIVQAGLQAAGLPTAAVQVIDTTDRAAVGKLVTMTEHVDVIVPRGGKGLISRLAQEARVPLIKHLDGNCHVYVDAAADLAKAHDIAFNAKTYRYGVCGAMETLLVHADVAQRLLPVLGQALHEHGVELRGCARALQWLPEGKPADDADWATEYLGPVLAVRVVDTIDEAMDHIARWGSGHTDAIVTENLSAAQRFQREVDSSSVYVNLPTCFADGFEYGLGAEIGISTNRLHARGPVGLEGLTTLKWVLNGEGQVRG</sequence>